<reference key="1">
    <citation type="journal article" date="2007" name="J. Bacteriol.">
        <title>Genome-wide transcriptional changes in Streptococcus gordonii in response to competence signaling peptide.</title>
        <authorList>
            <person name="Vickerman M.M."/>
            <person name="Iobst S."/>
            <person name="Jesionowski A.M."/>
            <person name="Gill S.R."/>
        </authorList>
    </citation>
    <scope>NUCLEOTIDE SEQUENCE [LARGE SCALE GENOMIC DNA]</scope>
    <source>
        <strain>Challis / ATCC 35105 / BCRC 15272 / CH1 / DL1 / V288</strain>
    </source>
</reference>
<sequence length="403" mass="44508">MAKFNRIHLVVMDSVGIGAAPDANNFVNAGVPDGASDTLGHISKTVGLTVPNMAKIGLGNIERPVPLKTVPQEANPSGYYTKLEEVSLGKDTMTGHWEIMGLNITEPFDTFWNGFPEEILTQIEEFSGRKVIREANKPYSGTAVIDDFGPRQMETGELIIYTSADPVLQIAAHEEVIPLEELYRICEYARSITLDRPALLGRIIARPYVGEPGNFTRTANRHDYAVSPFEPTVLDKLNEAGIDTYSVGKINDIFNGAGINHDMGHNQSNNHGVDNLVKALKDENFKHGFSFTNLVDFDALYGHRRNPHGYRDCLEEFDARIPEIIENMREDDLLMITADHGNDPTYAGTDHTREYIPLLIFGKSLSGHGHIPVGHFADISATVAENFGVDKAMIGESFLDKLV</sequence>
<evidence type="ECO:0000255" key="1">
    <source>
        <dbReference type="HAMAP-Rule" id="MF_00740"/>
    </source>
</evidence>
<dbReference type="EC" id="5.4.2.7" evidence="1"/>
<dbReference type="EMBL" id="CP000725">
    <property type="protein sequence ID" value="ABV10973.1"/>
    <property type="molecule type" value="Genomic_DNA"/>
</dbReference>
<dbReference type="RefSeq" id="WP_012000659.1">
    <property type="nucleotide sequence ID" value="NC_009785.1"/>
</dbReference>
<dbReference type="SMR" id="A8AXN8"/>
<dbReference type="STRING" id="467705.SGO_1264"/>
<dbReference type="KEGG" id="sgo:SGO_1264"/>
<dbReference type="eggNOG" id="COG1015">
    <property type="taxonomic scope" value="Bacteria"/>
</dbReference>
<dbReference type="HOGENOM" id="CLU_053861_0_0_9"/>
<dbReference type="UniPathway" id="UPA00002">
    <property type="reaction ID" value="UER00467"/>
</dbReference>
<dbReference type="Proteomes" id="UP000001131">
    <property type="component" value="Chromosome"/>
</dbReference>
<dbReference type="GO" id="GO:0005829">
    <property type="term" value="C:cytosol"/>
    <property type="evidence" value="ECO:0007669"/>
    <property type="project" value="TreeGrafter"/>
</dbReference>
<dbReference type="GO" id="GO:0000287">
    <property type="term" value="F:magnesium ion binding"/>
    <property type="evidence" value="ECO:0007669"/>
    <property type="project" value="InterPro"/>
</dbReference>
<dbReference type="GO" id="GO:0030145">
    <property type="term" value="F:manganese ion binding"/>
    <property type="evidence" value="ECO:0007669"/>
    <property type="project" value="UniProtKB-UniRule"/>
</dbReference>
<dbReference type="GO" id="GO:0008973">
    <property type="term" value="F:phosphopentomutase activity"/>
    <property type="evidence" value="ECO:0007669"/>
    <property type="project" value="UniProtKB-UniRule"/>
</dbReference>
<dbReference type="GO" id="GO:0006018">
    <property type="term" value="P:2-deoxyribose 1-phosphate catabolic process"/>
    <property type="evidence" value="ECO:0007669"/>
    <property type="project" value="UniProtKB-UniRule"/>
</dbReference>
<dbReference type="GO" id="GO:0006015">
    <property type="term" value="P:5-phosphoribose 1-diphosphate biosynthetic process"/>
    <property type="evidence" value="ECO:0007669"/>
    <property type="project" value="UniProtKB-UniPathway"/>
</dbReference>
<dbReference type="GO" id="GO:0043094">
    <property type="term" value="P:metabolic compound salvage"/>
    <property type="evidence" value="ECO:0007669"/>
    <property type="project" value="InterPro"/>
</dbReference>
<dbReference type="GO" id="GO:0009117">
    <property type="term" value="P:nucleotide metabolic process"/>
    <property type="evidence" value="ECO:0007669"/>
    <property type="project" value="InterPro"/>
</dbReference>
<dbReference type="CDD" id="cd16009">
    <property type="entry name" value="PPM"/>
    <property type="match status" value="1"/>
</dbReference>
<dbReference type="FunFam" id="3.30.70.1250:FF:000001">
    <property type="entry name" value="Phosphopentomutase"/>
    <property type="match status" value="1"/>
</dbReference>
<dbReference type="Gene3D" id="3.40.720.10">
    <property type="entry name" value="Alkaline Phosphatase, subunit A"/>
    <property type="match status" value="1"/>
</dbReference>
<dbReference type="Gene3D" id="3.30.70.1250">
    <property type="entry name" value="Phosphopentomutase"/>
    <property type="match status" value="1"/>
</dbReference>
<dbReference type="HAMAP" id="MF_00740">
    <property type="entry name" value="Phosphopentomut"/>
    <property type="match status" value="1"/>
</dbReference>
<dbReference type="InterPro" id="IPR017850">
    <property type="entry name" value="Alkaline_phosphatase_core_sf"/>
</dbReference>
<dbReference type="InterPro" id="IPR010045">
    <property type="entry name" value="DeoB"/>
</dbReference>
<dbReference type="InterPro" id="IPR006124">
    <property type="entry name" value="Metalloenzyme"/>
</dbReference>
<dbReference type="InterPro" id="IPR024052">
    <property type="entry name" value="Phosphopentomutase_DeoB_cap_sf"/>
</dbReference>
<dbReference type="NCBIfam" id="TIGR01696">
    <property type="entry name" value="deoB"/>
    <property type="match status" value="1"/>
</dbReference>
<dbReference type="NCBIfam" id="NF003766">
    <property type="entry name" value="PRK05362.1"/>
    <property type="match status" value="1"/>
</dbReference>
<dbReference type="PANTHER" id="PTHR21110">
    <property type="entry name" value="PHOSPHOPENTOMUTASE"/>
    <property type="match status" value="1"/>
</dbReference>
<dbReference type="PANTHER" id="PTHR21110:SF0">
    <property type="entry name" value="PHOSPHOPENTOMUTASE"/>
    <property type="match status" value="1"/>
</dbReference>
<dbReference type="Pfam" id="PF01676">
    <property type="entry name" value="Metalloenzyme"/>
    <property type="match status" value="1"/>
</dbReference>
<dbReference type="PIRSF" id="PIRSF001491">
    <property type="entry name" value="Ppentomutase"/>
    <property type="match status" value="1"/>
</dbReference>
<dbReference type="SUPFAM" id="SSF53649">
    <property type="entry name" value="Alkaline phosphatase-like"/>
    <property type="match status" value="1"/>
</dbReference>
<dbReference type="SUPFAM" id="SSF143856">
    <property type="entry name" value="DeoB insert domain-like"/>
    <property type="match status" value="1"/>
</dbReference>
<comment type="function">
    <text evidence="1">Isomerase that catalyzes the conversion of deoxy-ribose 1-phosphate (dRib-1-P) and ribose 1-phosphate (Rib-1-P) to deoxy-ribose 5-phosphate (dRib-5-P) and ribose 5-phosphate (Rib-5-P), respectively.</text>
</comment>
<comment type="catalytic activity">
    <reaction evidence="1">
        <text>2-deoxy-alpha-D-ribose 1-phosphate = 2-deoxy-D-ribose 5-phosphate</text>
        <dbReference type="Rhea" id="RHEA:27658"/>
        <dbReference type="ChEBI" id="CHEBI:57259"/>
        <dbReference type="ChEBI" id="CHEBI:62877"/>
        <dbReference type="EC" id="5.4.2.7"/>
    </reaction>
</comment>
<comment type="catalytic activity">
    <reaction evidence="1">
        <text>alpha-D-ribose 1-phosphate = D-ribose 5-phosphate</text>
        <dbReference type="Rhea" id="RHEA:18793"/>
        <dbReference type="ChEBI" id="CHEBI:57720"/>
        <dbReference type="ChEBI" id="CHEBI:78346"/>
        <dbReference type="EC" id="5.4.2.7"/>
    </reaction>
</comment>
<comment type="cofactor">
    <cofactor evidence="1">
        <name>Mn(2+)</name>
        <dbReference type="ChEBI" id="CHEBI:29035"/>
    </cofactor>
    <text evidence="1">Binds 2 manganese ions.</text>
</comment>
<comment type="pathway">
    <text evidence="1">Carbohydrate degradation; 2-deoxy-D-ribose 1-phosphate degradation; D-glyceraldehyde 3-phosphate and acetaldehyde from 2-deoxy-alpha-D-ribose 1-phosphate: step 1/2.</text>
</comment>
<comment type="subcellular location">
    <subcellularLocation>
        <location evidence="1">Cytoplasm</location>
    </subcellularLocation>
</comment>
<comment type="similarity">
    <text evidence="1">Belongs to the phosphopentomutase family.</text>
</comment>
<accession>A8AXN8</accession>
<protein>
    <recommendedName>
        <fullName evidence="1">Phosphopentomutase</fullName>
        <ecNumber evidence="1">5.4.2.7</ecNumber>
    </recommendedName>
    <alternativeName>
        <fullName evidence="1">Phosphodeoxyribomutase</fullName>
    </alternativeName>
</protein>
<keyword id="KW-0963">Cytoplasm</keyword>
<keyword id="KW-0413">Isomerase</keyword>
<keyword id="KW-0464">Manganese</keyword>
<keyword id="KW-0479">Metal-binding</keyword>
<keyword id="KW-1185">Reference proteome</keyword>
<proteinExistence type="inferred from homology"/>
<organism>
    <name type="scientific">Streptococcus gordonii (strain Challis / ATCC 35105 / BCRC 15272 / CH1 / DL1 / V288)</name>
    <dbReference type="NCBI Taxonomy" id="467705"/>
    <lineage>
        <taxon>Bacteria</taxon>
        <taxon>Bacillati</taxon>
        <taxon>Bacillota</taxon>
        <taxon>Bacilli</taxon>
        <taxon>Lactobacillales</taxon>
        <taxon>Streptococcaceae</taxon>
        <taxon>Streptococcus</taxon>
    </lineage>
</organism>
<gene>
    <name evidence="1" type="primary">deoB</name>
    <name type="ordered locus">SGO_1264</name>
</gene>
<feature type="chain" id="PRO_1000083447" description="Phosphopentomutase">
    <location>
        <begin position="1"/>
        <end position="403"/>
    </location>
</feature>
<feature type="binding site" evidence="1">
    <location>
        <position position="13"/>
    </location>
    <ligand>
        <name>Mn(2+)</name>
        <dbReference type="ChEBI" id="CHEBI:29035"/>
        <label>1</label>
    </ligand>
</feature>
<feature type="binding site" evidence="1">
    <location>
        <position position="298"/>
    </location>
    <ligand>
        <name>Mn(2+)</name>
        <dbReference type="ChEBI" id="CHEBI:29035"/>
        <label>2</label>
    </ligand>
</feature>
<feature type="binding site" evidence="1">
    <location>
        <position position="303"/>
    </location>
    <ligand>
        <name>Mn(2+)</name>
        <dbReference type="ChEBI" id="CHEBI:29035"/>
        <label>2</label>
    </ligand>
</feature>
<feature type="binding site" evidence="1">
    <location>
        <position position="339"/>
    </location>
    <ligand>
        <name>Mn(2+)</name>
        <dbReference type="ChEBI" id="CHEBI:29035"/>
        <label>1</label>
    </ligand>
</feature>
<feature type="binding site" evidence="1">
    <location>
        <position position="340"/>
    </location>
    <ligand>
        <name>Mn(2+)</name>
        <dbReference type="ChEBI" id="CHEBI:29035"/>
        <label>1</label>
    </ligand>
</feature>
<feature type="binding site" evidence="1">
    <location>
        <position position="351"/>
    </location>
    <ligand>
        <name>Mn(2+)</name>
        <dbReference type="ChEBI" id="CHEBI:29035"/>
        <label>2</label>
    </ligand>
</feature>
<name>DEOB_STRGC</name>